<accession>B1LAW3</accession>
<protein>
    <recommendedName>
        <fullName evidence="1">DNA mismatch repair protein MutS</fullName>
    </recommendedName>
</protein>
<keyword id="KW-0067">ATP-binding</keyword>
<keyword id="KW-0227">DNA damage</keyword>
<keyword id="KW-0234">DNA repair</keyword>
<keyword id="KW-0238">DNA-binding</keyword>
<keyword id="KW-0547">Nucleotide-binding</keyword>
<reference key="1">
    <citation type="journal article" date="2011" name="J. Bacteriol.">
        <title>Genome sequence of Thermotoga sp. strain RQ2, a hyperthermophilic bacterium isolated from a geothermally heated region of the seafloor near Ribeira Quente, the Azores.</title>
        <authorList>
            <person name="Swithers K.S."/>
            <person name="DiPippo J.L."/>
            <person name="Bruce D.C."/>
            <person name="Detter C."/>
            <person name="Tapia R."/>
            <person name="Han S."/>
            <person name="Saunders E."/>
            <person name="Goodwin L.A."/>
            <person name="Han J."/>
            <person name="Woyke T."/>
            <person name="Pitluck S."/>
            <person name="Pennacchio L."/>
            <person name="Nolan M."/>
            <person name="Mikhailova N."/>
            <person name="Lykidis A."/>
            <person name="Land M.L."/>
            <person name="Brettin T."/>
            <person name="Stetter K.O."/>
            <person name="Nelson K.E."/>
            <person name="Gogarten J.P."/>
            <person name="Noll K.M."/>
        </authorList>
    </citation>
    <scope>NUCLEOTIDE SEQUENCE [LARGE SCALE GENOMIC DNA]</scope>
    <source>
        <strain>RQ2</strain>
    </source>
</reference>
<dbReference type="EMBL" id="CP000969">
    <property type="protein sequence ID" value="ACB09461.1"/>
    <property type="molecule type" value="Genomic_DNA"/>
</dbReference>
<dbReference type="RefSeq" id="WP_012310951.1">
    <property type="nucleotide sequence ID" value="NC_010483.1"/>
</dbReference>
<dbReference type="SMR" id="B1LAW3"/>
<dbReference type="KEGG" id="trq:TRQ2_1115"/>
<dbReference type="HOGENOM" id="CLU_002472_3_0_0"/>
<dbReference type="Proteomes" id="UP000001687">
    <property type="component" value="Chromosome"/>
</dbReference>
<dbReference type="GO" id="GO:0005829">
    <property type="term" value="C:cytosol"/>
    <property type="evidence" value="ECO:0007669"/>
    <property type="project" value="TreeGrafter"/>
</dbReference>
<dbReference type="GO" id="GO:0005524">
    <property type="term" value="F:ATP binding"/>
    <property type="evidence" value="ECO:0007669"/>
    <property type="project" value="UniProtKB-UniRule"/>
</dbReference>
<dbReference type="GO" id="GO:0140664">
    <property type="term" value="F:ATP-dependent DNA damage sensor activity"/>
    <property type="evidence" value="ECO:0007669"/>
    <property type="project" value="InterPro"/>
</dbReference>
<dbReference type="GO" id="GO:0003684">
    <property type="term" value="F:damaged DNA binding"/>
    <property type="evidence" value="ECO:0007669"/>
    <property type="project" value="UniProtKB-UniRule"/>
</dbReference>
<dbReference type="GO" id="GO:0030983">
    <property type="term" value="F:mismatched DNA binding"/>
    <property type="evidence" value="ECO:0007669"/>
    <property type="project" value="InterPro"/>
</dbReference>
<dbReference type="GO" id="GO:0006298">
    <property type="term" value="P:mismatch repair"/>
    <property type="evidence" value="ECO:0007669"/>
    <property type="project" value="UniProtKB-UniRule"/>
</dbReference>
<dbReference type="CDD" id="cd03284">
    <property type="entry name" value="ABC_MutS1"/>
    <property type="match status" value="1"/>
</dbReference>
<dbReference type="FunFam" id="1.10.1420.10:FF:000007">
    <property type="entry name" value="DNA mismatch repair protein MutS"/>
    <property type="match status" value="1"/>
</dbReference>
<dbReference type="FunFam" id="3.40.1170.10:FF:000001">
    <property type="entry name" value="DNA mismatch repair protein MutS"/>
    <property type="match status" value="1"/>
</dbReference>
<dbReference type="FunFam" id="3.40.50.300:FF:002984">
    <property type="entry name" value="DNA mismatch repair protein MutS 1"/>
    <property type="match status" value="1"/>
</dbReference>
<dbReference type="Gene3D" id="1.10.1420.10">
    <property type="match status" value="2"/>
</dbReference>
<dbReference type="Gene3D" id="3.40.1170.10">
    <property type="entry name" value="DNA repair protein MutS, domain I"/>
    <property type="match status" value="1"/>
</dbReference>
<dbReference type="Gene3D" id="3.30.420.110">
    <property type="entry name" value="MutS, connector domain"/>
    <property type="match status" value="1"/>
</dbReference>
<dbReference type="Gene3D" id="3.40.50.300">
    <property type="entry name" value="P-loop containing nucleotide triphosphate hydrolases"/>
    <property type="match status" value="1"/>
</dbReference>
<dbReference type="HAMAP" id="MF_00096">
    <property type="entry name" value="MutS"/>
    <property type="match status" value="1"/>
</dbReference>
<dbReference type="InterPro" id="IPR005748">
    <property type="entry name" value="DNA_mismatch_repair_MutS"/>
</dbReference>
<dbReference type="InterPro" id="IPR007695">
    <property type="entry name" value="DNA_mismatch_repair_MutS-lik_N"/>
</dbReference>
<dbReference type="InterPro" id="IPR017261">
    <property type="entry name" value="DNA_mismatch_repair_MutS/MSH"/>
</dbReference>
<dbReference type="InterPro" id="IPR000432">
    <property type="entry name" value="DNA_mismatch_repair_MutS_C"/>
</dbReference>
<dbReference type="InterPro" id="IPR007861">
    <property type="entry name" value="DNA_mismatch_repair_MutS_clamp"/>
</dbReference>
<dbReference type="InterPro" id="IPR007696">
    <property type="entry name" value="DNA_mismatch_repair_MutS_core"/>
</dbReference>
<dbReference type="InterPro" id="IPR016151">
    <property type="entry name" value="DNA_mismatch_repair_MutS_N"/>
</dbReference>
<dbReference type="InterPro" id="IPR036187">
    <property type="entry name" value="DNA_mismatch_repair_MutS_sf"/>
</dbReference>
<dbReference type="InterPro" id="IPR007860">
    <property type="entry name" value="DNA_mmatch_repair_MutS_con_dom"/>
</dbReference>
<dbReference type="InterPro" id="IPR045076">
    <property type="entry name" value="MutS"/>
</dbReference>
<dbReference type="InterPro" id="IPR036678">
    <property type="entry name" value="MutS_con_dom_sf"/>
</dbReference>
<dbReference type="InterPro" id="IPR027417">
    <property type="entry name" value="P-loop_NTPase"/>
</dbReference>
<dbReference type="NCBIfam" id="TIGR01070">
    <property type="entry name" value="mutS1"/>
    <property type="match status" value="1"/>
</dbReference>
<dbReference type="NCBIfam" id="NF003810">
    <property type="entry name" value="PRK05399.1"/>
    <property type="match status" value="1"/>
</dbReference>
<dbReference type="PANTHER" id="PTHR11361:SF34">
    <property type="entry name" value="DNA MISMATCH REPAIR PROTEIN MSH1, MITOCHONDRIAL"/>
    <property type="match status" value="1"/>
</dbReference>
<dbReference type="PANTHER" id="PTHR11361">
    <property type="entry name" value="DNA MISMATCH REPAIR PROTEIN MUTS FAMILY MEMBER"/>
    <property type="match status" value="1"/>
</dbReference>
<dbReference type="Pfam" id="PF01624">
    <property type="entry name" value="MutS_I"/>
    <property type="match status" value="1"/>
</dbReference>
<dbReference type="Pfam" id="PF05188">
    <property type="entry name" value="MutS_II"/>
    <property type="match status" value="1"/>
</dbReference>
<dbReference type="Pfam" id="PF05192">
    <property type="entry name" value="MutS_III"/>
    <property type="match status" value="1"/>
</dbReference>
<dbReference type="Pfam" id="PF05190">
    <property type="entry name" value="MutS_IV"/>
    <property type="match status" value="1"/>
</dbReference>
<dbReference type="Pfam" id="PF00488">
    <property type="entry name" value="MutS_V"/>
    <property type="match status" value="1"/>
</dbReference>
<dbReference type="PIRSF" id="PIRSF037677">
    <property type="entry name" value="DNA_mis_repair_Msh6"/>
    <property type="match status" value="1"/>
</dbReference>
<dbReference type="SMART" id="SM00534">
    <property type="entry name" value="MUTSac"/>
    <property type="match status" value="1"/>
</dbReference>
<dbReference type="SMART" id="SM00533">
    <property type="entry name" value="MUTSd"/>
    <property type="match status" value="1"/>
</dbReference>
<dbReference type="SUPFAM" id="SSF55271">
    <property type="entry name" value="DNA repair protein MutS, domain I"/>
    <property type="match status" value="1"/>
</dbReference>
<dbReference type="SUPFAM" id="SSF53150">
    <property type="entry name" value="DNA repair protein MutS, domain II"/>
    <property type="match status" value="1"/>
</dbReference>
<dbReference type="SUPFAM" id="SSF48334">
    <property type="entry name" value="DNA repair protein MutS, domain III"/>
    <property type="match status" value="1"/>
</dbReference>
<dbReference type="SUPFAM" id="SSF52540">
    <property type="entry name" value="P-loop containing nucleoside triphosphate hydrolases"/>
    <property type="match status" value="1"/>
</dbReference>
<dbReference type="PROSITE" id="PS00486">
    <property type="entry name" value="DNA_MISMATCH_REPAIR_2"/>
    <property type="match status" value="1"/>
</dbReference>
<evidence type="ECO:0000255" key="1">
    <source>
        <dbReference type="HAMAP-Rule" id="MF_00096"/>
    </source>
</evidence>
<sequence>MKVTPLMEQYLRIKEQYKDSILLFRLGDFYEAFFEDAKIVSKVLNIVLTRRQDAPMAGIPYHALNTYLKKLVEAGYKVAICDQMEEPSKSKKLIRREVTRVVTPGSIVEDEFLSETNNYMAVVSEEKGRYCTVFCDVSTGEVLVHESSDEQETLDLLKNYSISQIVCSEHLKSSLRERFPGVYTESISEWYFSDLEEVEKAYNLKDIHHFELSPLALKTLAALIKYVKYTMITEDLNLKPPLLISQRDYMILDSATVENLSLIPGDRGKNLFDVLNNTETPMGARLLKKWILHPLVDRKQIEERLEAVERLVNDRVSLEEMRNFLSNVRDVERIVSRVEYNRSVPRDLVALRETLEIIPKLNEILSNFGVFNKLAFPEELVDLLRRAIEDDPLGSPGEGKVIKRGFSPELDEYRDLLEHAEERLKEFEEKERERTGIQKLRVGYNQVFGYYIEVTKANLDKIPDDYERKQTLVNSERFITPELKEFETKIMAAKERIEEMEKELFKSVCEEVKKHKEVLLKLSEDLAKMDVLSTLAYDAILYNYTKPVFSEDRLEIKGGRHPVVERFTQNFVENDIYMDNEKRFVVITGPNMSGKSTFIRQVGLISLMAQIGSFVPAQKAILPVFDRIFTRMGARDDLAGGRSTFLVEMNEMALILLKSTEKSLVLLDEVGRGTSTQDGVSIAWAISEELIKRGCKVLFATHFTELTELEKHFPQVQNKTILVKEEGKNVIFTHKVVDGVADRSYGIEVAKIAGIPDRVINRAYEILERNFKNHTKKNGKSNRFSQQIPLFPV</sequence>
<comment type="function">
    <text evidence="1">This protein is involved in the repair of mismatches in DNA. It is possible that it carries out the mismatch recognition step. This protein has a weak ATPase activity.</text>
</comment>
<comment type="similarity">
    <text evidence="1">Belongs to the DNA mismatch repair MutS family.</text>
</comment>
<gene>
    <name evidence="1" type="primary">mutS</name>
    <name type="ordered locus">TRQ2_1115</name>
</gene>
<organism>
    <name type="scientific">Thermotoga sp. (strain RQ2)</name>
    <dbReference type="NCBI Taxonomy" id="126740"/>
    <lineage>
        <taxon>Bacteria</taxon>
        <taxon>Thermotogati</taxon>
        <taxon>Thermotogota</taxon>
        <taxon>Thermotogae</taxon>
        <taxon>Thermotogales</taxon>
        <taxon>Thermotogaceae</taxon>
        <taxon>Thermotoga</taxon>
    </lineage>
</organism>
<proteinExistence type="inferred from homology"/>
<feature type="chain" id="PRO_1000093651" description="DNA mismatch repair protein MutS">
    <location>
        <begin position="1"/>
        <end position="793"/>
    </location>
</feature>
<feature type="binding site" evidence="1">
    <location>
        <begin position="589"/>
        <end position="596"/>
    </location>
    <ligand>
        <name>ATP</name>
        <dbReference type="ChEBI" id="CHEBI:30616"/>
    </ligand>
</feature>
<name>MUTS_THESQ</name>